<evidence type="ECO:0000255" key="1"/>
<evidence type="ECO:0000305" key="2"/>
<organismHost>
    <name type="scientific">Antilocapra americana</name>
    <name type="common">Pronghorn</name>
    <dbReference type="NCBI Taxonomy" id="9891"/>
</organismHost>
<organismHost>
    <name type="scientific">Bos taurus</name>
    <name type="common">Bovine</name>
    <dbReference type="NCBI Taxonomy" id="9913"/>
</organismHost>
<organismHost>
    <name type="scientific">Capra hircus</name>
    <name type="common">Goat</name>
    <dbReference type="NCBI Taxonomy" id="9925"/>
</organismHost>
<organismHost>
    <name type="scientific">Culicoides variipennis</name>
    <name type="common">Biting midge</name>
    <dbReference type="NCBI Taxonomy" id="46212"/>
</organismHost>
<organismHost>
    <name type="scientific">Ovis aries</name>
    <name type="common">Sheep</name>
    <dbReference type="NCBI Taxonomy" id="9940"/>
</organismHost>
<keyword id="KW-0167">Capsid protein</keyword>
<keyword id="KW-0325">Glycoprotein</keyword>
<keyword id="KW-1152">Outer capsid protein</keyword>
<keyword id="KW-0946">Virion</keyword>
<protein>
    <recommendedName>
        <fullName>Core protein VP7</fullName>
    </recommendedName>
</protein>
<sequence>MDTIAARALTVMRVCATLQEARIVLEPNVMEILGIAINRYNGLTLRGVTMRPTSLAQRNEMFFMCLDMMVSAAGINVGPISPDYTQHMATIGVLATPEIPFTTEAANEIARVTGETSTWGPARQPYGFFLETEEVYQPGRWFMRAAQVVTPVVCGPNMVQVSLNAGAIGDVQQIFQGRNDPMMIYLVWRRIENFSMPQGNSQRTLAGVTVSVGGVDMRAGRIIAWDGQAVLQIHNPTQQNAMVQIQVVFYVSMDKTLNQYPALTAEIFNVYSFRDHTWHGLRTAILNRTTLPNMLPPIFPPNDRDSVLTILLLSTLADVYSVLRPEFAIHGVNPMPGPLTRAIARAAYA</sequence>
<feature type="chain" id="PRO_0000222734" description="Core protein VP7">
    <location>
        <begin position="1"/>
        <end position="349"/>
    </location>
</feature>
<feature type="glycosylation site" description="N-linked (GlcNAc...) asparagine; by host" evidence="1">
    <location>
        <position position="193"/>
    </location>
</feature>
<feature type="glycosylation site" description="N-linked (GlcNAc...) asparagine; by host" evidence="1">
    <location>
        <position position="287"/>
    </location>
</feature>
<accession>P17375</accession>
<organism>
    <name type="scientific">Bluetongue virus 13 (isolate USA)</name>
    <name type="common">BTV 13</name>
    <dbReference type="NCBI Taxonomy" id="33717"/>
    <lineage>
        <taxon>Viruses</taxon>
        <taxon>Riboviria</taxon>
        <taxon>Orthornavirae</taxon>
        <taxon>Duplornaviricota</taxon>
        <taxon>Resentoviricetes</taxon>
        <taxon>Reovirales</taxon>
        <taxon>Sedoreoviridae</taxon>
        <taxon>Orbivirus</taxon>
        <taxon>Bluetongue virus</taxon>
    </lineage>
</organism>
<reference key="1">
    <citation type="journal article" date="1989" name="Virology">
        <title>Sequence analyses and structural predictions of double-stranded RNA segment S1 and VP7 from United States prototype bluetongue virus serotypes 13 and 10.</title>
        <authorList>
            <person name="Kowalik T.F."/>
            <person name="Li J.K.-K."/>
        </authorList>
    </citation>
    <scope>NUCLEOTIDE SEQUENCE [GENOMIC RNA]</scope>
</reference>
<proteinExistence type="inferred from homology"/>
<name>VP7_BTV13</name>
<gene>
    <name type="primary">Segment-7</name>
</gene>
<comment type="function">
    <text>The VP7 protein is one of the five proteins (with VP1, VP3, VP4, and VP6) which form the inner capsid of the virus.</text>
</comment>
<comment type="subunit">
    <text>Homotrimer that assemble in a complex of 260 capsomers on an inner scaffold composed of VP3.</text>
</comment>
<comment type="subcellular location">
    <subcellularLocation>
        <location evidence="2">Virion</location>
    </subcellularLocation>
</comment>
<comment type="similarity">
    <text evidence="2">Belongs to the orbivirus VP7 family.</text>
</comment>
<dbReference type="EMBL" id="J04365">
    <property type="protein sequence ID" value="AAA42833.1"/>
    <property type="molecule type" value="Genomic_RNA"/>
</dbReference>
<dbReference type="PIR" id="A33385">
    <property type="entry name" value="P7XR13"/>
</dbReference>
<dbReference type="SMR" id="P17375"/>
<dbReference type="GlyCosmos" id="P17375">
    <property type="glycosylation" value="2 sites, No reported glycans"/>
</dbReference>
<dbReference type="GO" id="GO:0019031">
    <property type="term" value="C:viral envelope"/>
    <property type="evidence" value="ECO:0007669"/>
    <property type="project" value="InterPro"/>
</dbReference>
<dbReference type="GO" id="GO:0039624">
    <property type="term" value="C:viral outer capsid"/>
    <property type="evidence" value="ECO:0007669"/>
    <property type="project" value="UniProtKB-KW"/>
</dbReference>
<dbReference type="GO" id="GO:0046789">
    <property type="term" value="F:host cell surface receptor binding"/>
    <property type="evidence" value="ECO:0007669"/>
    <property type="project" value="InterPro"/>
</dbReference>
<dbReference type="GO" id="GO:0005198">
    <property type="term" value="F:structural molecule activity"/>
    <property type="evidence" value="ECO:0007669"/>
    <property type="project" value="InterPro"/>
</dbReference>
<dbReference type="GO" id="GO:0019064">
    <property type="term" value="P:fusion of virus membrane with host plasma membrane"/>
    <property type="evidence" value="ECO:0007669"/>
    <property type="project" value="InterPro"/>
</dbReference>
<dbReference type="Gene3D" id="2.60.120.170">
    <property type="match status" value="1"/>
</dbReference>
<dbReference type="Gene3D" id="1.10.250.10">
    <property type="entry name" value="Bluetongue Virus 10, subunit 1, domain 1"/>
    <property type="match status" value="1"/>
</dbReference>
<dbReference type="Gene3D" id="1.10.170.10">
    <property type="entry name" value="Bluetongue Virus 10, subunit 1, domain 3"/>
    <property type="match status" value="1"/>
</dbReference>
<dbReference type="InterPro" id="IPR008980">
    <property type="entry name" value="Capsid_hemagglutn"/>
</dbReference>
<dbReference type="InterPro" id="IPR001803">
    <property type="entry name" value="Orbi_VP7_capsid"/>
</dbReference>
<dbReference type="InterPro" id="IPR023178">
    <property type="entry name" value="Orbi_VP7_capsid_C"/>
</dbReference>
<dbReference type="InterPro" id="IPR023176">
    <property type="entry name" value="Orbi_VP7_capsid_N"/>
</dbReference>
<dbReference type="InterPro" id="IPR008935">
    <property type="entry name" value="Virus_capsid_a-hlx_vir"/>
</dbReference>
<dbReference type="Pfam" id="PF00897">
    <property type="entry name" value="Orbi_VP7"/>
    <property type="match status" value="1"/>
</dbReference>
<dbReference type="PRINTS" id="PR00903">
    <property type="entry name" value="VP7CAPSID"/>
</dbReference>
<dbReference type="SUPFAM" id="SSF48345">
    <property type="entry name" value="A virus capsid protein alpha-helical domain"/>
    <property type="match status" value="1"/>
</dbReference>
<dbReference type="SUPFAM" id="SSF49818">
    <property type="entry name" value="Viral protein domain"/>
    <property type="match status" value="1"/>
</dbReference>